<reference key="1">
    <citation type="journal article" date="2001" name="Proc. Natl. Acad. Sci. U.S.A.">
        <title>Complete genomic sequence of Pasteurella multocida Pm70.</title>
        <authorList>
            <person name="May B.J."/>
            <person name="Zhang Q."/>
            <person name="Li L.L."/>
            <person name="Paustian M.L."/>
            <person name="Whittam T.S."/>
            <person name="Kapur V."/>
        </authorList>
    </citation>
    <scope>NUCLEOTIDE SEQUENCE [LARGE SCALE GENOMIC DNA]</scope>
    <source>
        <strain>Pm70</strain>
    </source>
</reference>
<sequence length="451" mass="51379">MKPDLSSLWQECLLQLQDQISLTDFSTWLRPLQADFSVQNTIVLYASNVFIKQKVDESYLAQLTKVAQELSGNAELVVQVKVGVKPEPKPAQPSALPTHHNKEENKPQTVIRSYLNPKHVFENFVEGKSNQLARAVAQKVADNPGEPSSNPLFLYGGTGLGKTHLLHAIGNGILSRNTNARVLYIHANNFMQQMVNAVRDNKMDEFKKFYRSLDALLVDDIQFFAEKEKTQEEFFHIFNNLFDTGRQIILTSDRYPKEIEKLEERLKSRFGWGLTTAIEPPELETRVAILLKKAEEKNIYLPEEVAFFIGQKLRTNVRDLEGALNRVSANAEFMGAAITIDFVRETLKDMLALQDKLVTVENIQKVVAEYYRIKVSDLKGKSRSRSIARPRQLAMALSKELTNRSLPEIGKNFGDKDHTTVLHACRKIAELREQEHSLEEDWSNLIRTLSV</sequence>
<organism>
    <name type="scientific">Pasteurella multocida (strain Pm70)</name>
    <dbReference type="NCBI Taxonomy" id="272843"/>
    <lineage>
        <taxon>Bacteria</taxon>
        <taxon>Pseudomonadati</taxon>
        <taxon>Pseudomonadota</taxon>
        <taxon>Gammaproteobacteria</taxon>
        <taxon>Pasteurellales</taxon>
        <taxon>Pasteurellaceae</taxon>
        <taxon>Pasteurella</taxon>
    </lineage>
</organism>
<dbReference type="EMBL" id="AE004439">
    <property type="protein sequence ID" value="AAK03245.1"/>
    <property type="molecule type" value="Genomic_DNA"/>
</dbReference>
<dbReference type="RefSeq" id="WP_005717536.1">
    <property type="nucleotide sequence ID" value="NC_002663.1"/>
</dbReference>
<dbReference type="SMR" id="Q9CLQ4"/>
<dbReference type="STRING" id="272843.PM1161"/>
<dbReference type="EnsemblBacteria" id="AAK03245">
    <property type="protein sequence ID" value="AAK03245"/>
    <property type="gene ID" value="PM1161"/>
</dbReference>
<dbReference type="GeneID" id="77206477"/>
<dbReference type="KEGG" id="pmu:PM1161"/>
<dbReference type="PATRIC" id="fig|272843.6.peg.1172"/>
<dbReference type="HOGENOM" id="CLU_026910_0_1_6"/>
<dbReference type="OrthoDB" id="9807019at2"/>
<dbReference type="Proteomes" id="UP000000809">
    <property type="component" value="Chromosome"/>
</dbReference>
<dbReference type="GO" id="GO:0005737">
    <property type="term" value="C:cytoplasm"/>
    <property type="evidence" value="ECO:0007669"/>
    <property type="project" value="UniProtKB-SubCell"/>
</dbReference>
<dbReference type="GO" id="GO:0005886">
    <property type="term" value="C:plasma membrane"/>
    <property type="evidence" value="ECO:0007669"/>
    <property type="project" value="TreeGrafter"/>
</dbReference>
<dbReference type="GO" id="GO:0005524">
    <property type="term" value="F:ATP binding"/>
    <property type="evidence" value="ECO:0007669"/>
    <property type="project" value="UniProtKB-UniRule"/>
</dbReference>
<dbReference type="GO" id="GO:0016887">
    <property type="term" value="F:ATP hydrolysis activity"/>
    <property type="evidence" value="ECO:0007669"/>
    <property type="project" value="InterPro"/>
</dbReference>
<dbReference type="GO" id="GO:0003688">
    <property type="term" value="F:DNA replication origin binding"/>
    <property type="evidence" value="ECO:0007669"/>
    <property type="project" value="UniProtKB-UniRule"/>
</dbReference>
<dbReference type="GO" id="GO:0008289">
    <property type="term" value="F:lipid binding"/>
    <property type="evidence" value="ECO:0007669"/>
    <property type="project" value="UniProtKB-KW"/>
</dbReference>
<dbReference type="GO" id="GO:0006270">
    <property type="term" value="P:DNA replication initiation"/>
    <property type="evidence" value="ECO:0007669"/>
    <property type="project" value="UniProtKB-UniRule"/>
</dbReference>
<dbReference type="GO" id="GO:0006275">
    <property type="term" value="P:regulation of DNA replication"/>
    <property type="evidence" value="ECO:0007669"/>
    <property type="project" value="UniProtKB-UniRule"/>
</dbReference>
<dbReference type="CDD" id="cd00009">
    <property type="entry name" value="AAA"/>
    <property type="match status" value="1"/>
</dbReference>
<dbReference type="CDD" id="cd06571">
    <property type="entry name" value="Bac_DnaA_C"/>
    <property type="match status" value="1"/>
</dbReference>
<dbReference type="FunFam" id="1.10.1750.10:FF:000001">
    <property type="entry name" value="Chromosomal replication initiator protein DnaA"/>
    <property type="match status" value="1"/>
</dbReference>
<dbReference type="FunFam" id="1.10.8.60:FF:000003">
    <property type="entry name" value="Chromosomal replication initiator protein DnaA"/>
    <property type="match status" value="1"/>
</dbReference>
<dbReference type="FunFam" id="3.40.50.300:FF:000103">
    <property type="entry name" value="Chromosomal replication initiator protein DnaA"/>
    <property type="match status" value="1"/>
</dbReference>
<dbReference type="Gene3D" id="1.10.1750.10">
    <property type="match status" value="1"/>
</dbReference>
<dbReference type="Gene3D" id="1.10.8.60">
    <property type="match status" value="1"/>
</dbReference>
<dbReference type="Gene3D" id="3.30.300.180">
    <property type="match status" value="1"/>
</dbReference>
<dbReference type="Gene3D" id="3.40.50.300">
    <property type="entry name" value="P-loop containing nucleotide triphosphate hydrolases"/>
    <property type="match status" value="1"/>
</dbReference>
<dbReference type="HAMAP" id="MF_00377">
    <property type="entry name" value="DnaA_bact"/>
    <property type="match status" value="1"/>
</dbReference>
<dbReference type="InterPro" id="IPR003593">
    <property type="entry name" value="AAA+_ATPase"/>
</dbReference>
<dbReference type="InterPro" id="IPR001957">
    <property type="entry name" value="Chromosome_initiator_DnaA"/>
</dbReference>
<dbReference type="InterPro" id="IPR020591">
    <property type="entry name" value="Chromosome_initiator_DnaA-like"/>
</dbReference>
<dbReference type="InterPro" id="IPR018312">
    <property type="entry name" value="Chromosome_initiator_DnaA_CS"/>
</dbReference>
<dbReference type="InterPro" id="IPR013159">
    <property type="entry name" value="DnaA_C"/>
</dbReference>
<dbReference type="InterPro" id="IPR013317">
    <property type="entry name" value="DnaA_dom"/>
</dbReference>
<dbReference type="InterPro" id="IPR024633">
    <property type="entry name" value="DnaA_N_dom"/>
</dbReference>
<dbReference type="InterPro" id="IPR038454">
    <property type="entry name" value="DnaA_N_sf"/>
</dbReference>
<dbReference type="InterPro" id="IPR027417">
    <property type="entry name" value="P-loop_NTPase"/>
</dbReference>
<dbReference type="InterPro" id="IPR010921">
    <property type="entry name" value="Trp_repressor/repl_initiator"/>
</dbReference>
<dbReference type="NCBIfam" id="TIGR00362">
    <property type="entry name" value="DnaA"/>
    <property type="match status" value="1"/>
</dbReference>
<dbReference type="PANTHER" id="PTHR30050">
    <property type="entry name" value="CHROMOSOMAL REPLICATION INITIATOR PROTEIN DNAA"/>
    <property type="match status" value="1"/>
</dbReference>
<dbReference type="PANTHER" id="PTHR30050:SF2">
    <property type="entry name" value="CHROMOSOMAL REPLICATION INITIATOR PROTEIN DNAA"/>
    <property type="match status" value="1"/>
</dbReference>
<dbReference type="Pfam" id="PF00308">
    <property type="entry name" value="Bac_DnaA"/>
    <property type="match status" value="1"/>
</dbReference>
<dbReference type="Pfam" id="PF08299">
    <property type="entry name" value="Bac_DnaA_C"/>
    <property type="match status" value="1"/>
</dbReference>
<dbReference type="Pfam" id="PF11638">
    <property type="entry name" value="DnaA_N"/>
    <property type="match status" value="1"/>
</dbReference>
<dbReference type="PRINTS" id="PR00051">
    <property type="entry name" value="DNAA"/>
</dbReference>
<dbReference type="SMART" id="SM00382">
    <property type="entry name" value="AAA"/>
    <property type="match status" value="1"/>
</dbReference>
<dbReference type="SMART" id="SM00760">
    <property type="entry name" value="Bac_DnaA_C"/>
    <property type="match status" value="1"/>
</dbReference>
<dbReference type="SUPFAM" id="SSF52540">
    <property type="entry name" value="P-loop containing nucleoside triphosphate hydrolases"/>
    <property type="match status" value="1"/>
</dbReference>
<dbReference type="SUPFAM" id="SSF48295">
    <property type="entry name" value="TrpR-like"/>
    <property type="match status" value="1"/>
</dbReference>
<dbReference type="PROSITE" id="PS01008">
    <property type="entry name" value="DNAA"/>
    <property type="match status" value="1"/>
</dbReference>
<gene>
    <name evidence="1" type="primary">dnaA</name>
    <name type="ordered locus">PM1161</name>
</gene>
<proteinExistence type="inferred from homology"/>
<keyword id="KW-0067">ATP-binding</keyword>
<keyword id="KW-0963">Cytoplasm</keyword>
<keyword id="KW-0235">DNA replication</keyword>
<keyword id="KW-0238">DNA-binding</keyword>
<keyword id="KW-0446">Lipid-binding</keyword>
<keyword id="KW-0547">Nucleotide-binding</keyword>
<keyword id="KW-1185">Reference proteome</keyword>
<feature type="chain" id="PRO_0000114228" description="Chromosomal replication initiator protein DnaA">
    <location>
        <begin position="1"/>
        <end position="451"/>
    </location>
</feature>
<feature type="region of interest" description="Domain I, interacts with DnaA modulators" evidence="1">
    <location>
        <begin position="1"/>
        <end position="94"/>
    </location>
</feature>
<feature type="region of interest" description="Disordered" evidence="2">
    <location>
        <begin position="87"/>
        <end position="106"/>
    </location>
</feature>
<feature type="region of interest" description="Domain II" evidence="1">
    <location>
        <begin position="95"/>
        <end position="113"/>
    </location>
</feature>
<feature type="region of interest" description="Domain III, AAA+ region" evidence="1">
    <location>
        <begin position="114"/>
        <end position="331"/>
    </location>
</feature>
<feature type="region of interest" description="Domain IV, binds dsDNA" evidence="1">
    <location>
        <begin position="332"/>
        <end position="451"/>
    </location>
</feature>
<feature type="binding site" evidence="1">
    <location>
        <position position="159"/>
    </location>
    <ligand>
        <name>ATP</name>
        <dbReference type="ChEBI" id="CHEBI:30616"/>
    </ligand>
</feature>
<feature type="binding site" evidence="1">
    <location>
        <position position="161"/>
    </location>
    <ligand>
        <name>ATP</name>
        <dbReference type="ChEBI" id="CHEBI:30616"/>
    </ligand>
</feature>
<feature type="binding site" evidence="1">
    <location>
        <position position="162"/>
    </location>
    <ligand>
        <name>ATP</name>
        <dbReference type="ChEBI" id="CHEBI:30616"/>
    </ligand>
</feature>
<feature type="binding site" evidence="1">
    <location>
        <position position="163"/>
    </location>
    <ligand>
        <name>ATP</name>
        <dbReference type="ChEBI" id="CHEBI:30616"/>
    </ligand>
</feature>
<evidence type="ECO:0000255" key="1">
    <source>
        <dbReference type="HAMAP-Rule" id="MF_00377"/>
    </source>
</evidence>
<evidence type="ECO:0000256" key="2">
    <source>
        <dbReference type="SAM" id="MobiDB-lite"/>
    </source>
</evidence>
<comment type="function">
    <text evidence="1">Plays an essential role in the initiation and regulation of chromosomal replication. ATP-DnaA binds to the origin of replication (oriC) to initiate formation of the DNA replication initiation complex once per cell cycle. Binds the DnaA box (a 9 base pair repeat at the origin) and separates the double-stranded (ds)DNA. Forms a right-handed helical filament on oriC DNA; dsDNA binds to the exterior of the filament while single-stranded (ss)DNA is stabiized in the filament's interior. The ATP-DnaA-oriC complex binds and stabilizes one strand of the AT-rich DNA unwinding element (DUE), permitting loading of DNA polymerase. After initiation quickly degrades to an ADP-DnaA complex that is not apt for DNA replication. Binds acidic phospholipids.</text>
</comment>
<comment type="subunit">
    <text evidence="1">Oligomerizes as a right-handed, spiral filament on DNA at oriC.</text>
</comment>
<comment type="subcellular location">
    <subcellularLocation>
        <location evidence="1">Cytoplasm</location>
    </subcellularLocation>
</comment>
<comment type="domain">
    <text evidence="1">Domain I is involved in oligomerization and binding regulators, domain II is flexibile and of varying length in different bacteria, domain III forms the AAA+ region, while domain IV binds dsDNA.</text>
</comment>
<comment type="similarity">
    <text evidence="1">Belongs to the DnaA family.</text>
</comment>
<protein>
    <recommendedName>
        <fullName evidence="1">Chromosomal replication initiator protein DnaA</fullName>
    </recommendedName>
</protein>
<accession>Q9CLQ4</accession>
<name>DNAA_PASMU</name>